<reference key="1">
    <citation type="journal article" date="2009" name="PLoS Genet.">
        <title>Organised genome dynamics in the Escherichia coli species results in highly diverse adaptive paths.</title>
        <authorList>
            <person name="Touchon M."/>
            <person name="Hoede C."/>
            <person name="Tenaillon O."/>
            <person name="Barbe V."/>
            <person name="Baeriswyl S."/>
            <person name="Bidet P."/>
            <person name="Bingen E."/>
            <person name="Bonacorsi S."/>
            <person name="Bouchier C."/>
            <person name="Bouvet O."/>
            <person name="Calteau A."/>
            <person name="Chiapello H."/>
            <person name="Clermont O."/>
            <person name="Cruveiller S."/>
            <person name="Danchin A."/>
            <person name="Diard M."/>
            <person name="Dossat C."/>
            <person name="Karoui M.E."/>
            <person name="Frapy E."/>
            <person name="Garry L."/>
            <person name="Ghigo J.M."/>
            <person name="Gilles A.M."/>
            <person name="Johnson J."/>
            <person name="Le Bouguenec C."/>
            <person name="Lescat M."/>
            <person name="Mangenot S."/>
            <person name="Martinez-Jehanne V."/>
            <person name="Matic I."/>
            <person name="Nassif X."/>
            <person name="Oztas S."/>
            <person name="Petit M.A."/>
            <person name="Pichon C."/>
            <person name="Rouy Z."/>
            <person name="Ruf C.S."/>
            <person name="Schneider D."/>
            <person name="Tourret J."/>
            <person name="Vacherie B."/>
            <person name="Vallenet D."/>
            <person name="Medigue C."/>
            <person name="Rocha E.P.C."/>
            <person name="Denamur E."/>
        </authorList>
    </citation>
    <scope>NUCLEOTIDE SEQUENCE [LARGE SCALE GENOMIC DNA]</scope>
    <source>
        <strain>IAI1</strain>
    </source>
</reference>
<protein>
    <recommendedName>
        <fullName evidence="1">DNA mismatch repair protein MutL</fullName>
    </recommendedName>
</protein>
<proteinExistence type="inferred from homology"/>
<comment type="function">
    <text evidence="1">This protein is involved in the repair of mismatches in DNA. It is required for dam-dependent methyl-directed DNA mismatch repair. May act as a 'molecular matchmaker', a protein that promotes the formation of a stable complex between two or more DNA-binding proteins in an ATP-dependent manner without itself being part of a final effector complex.</text>
</comment>
<comment type="similarity">
    <text evidence="1">Belongs to the DNA mismatch repair MutL/HexB family.</text>
</comment>
<sequence length="615" mass="67880">MPIQVLPPQLANQIAAGEVVERPASVVKELVENSLDAGATRIDIDIERGGAKLIRIRDNGCGIKKDELALALARHATSKIASLDDLEAIISLGFRGEALASISSVSRLTLTSRTAEQQEAWQAYAEGRDMNVTVKPAAHPVGTTLEVLDLFYNTPARRKFLRTEKTEFNHIDEIIRRIALARFDVTINLSHNGKIVRQYRAVPEGGQKERRLGAICGTAFLEQALAIEWQHGDLTLRGWVADPNHTTPALAEIQYCYVNGRMMRDRLINHAIRQACEDKLGADQQPAFVLYLEIDPHQVDVNVHPAKHEVRFHQSRLVHDFIYQGVLSVLQQQLETPLPLDDEPQPAPRAIPENRVAAGRNHFAEPAAREPVAPRYTPAPASGSRPAAPWPNAQPGYQKQQGEVYRQLLQTPAPMQKLKAPEPQEPALAANSQSFGRVLTIVHSDCALLERDGNISLLSLPVAERWLRQAQLTPGEAPVCAQPLLIPLRLKVSAEEKSALEKAQSALAELGIDFQSDAQHVTIRAVPLPLRQQNLQILIPELIGYLAKQSVFEPGNIAQWIARNLMSEHAQWSMAQAITLLADVEQLCPQLVKTPPGGLLQSVDLHPAIKALKDE</sequence>
<feature type="chain" id="PRO_1000192176" description="DNA mismatch repair protein MutL">
    <location>
        <begin position="1"/>
        <end position="615"/>
    </location>
</feature>
<feature type="region of interest" description="Disordered" evidence="2">
    <location>
        <begin position="363"/>
        <end position="397"/>
    </location>
</feature>
<feature type="compositionally biased region" description="Low complexity" evidence="2">
    <location>
        <begin position="364"/>
        <end position="391"/>
    </location>
</feature>
<dbReference type="EMBL" id="CU928160">
    <property type="protein sequence ID" value="CAR01145.1"/>
    <property type="molecule type" value="Genomic_DNA"/>
</dbReference>
<dbReference type="RefSeq" id="WP_001122496.1">
    <property type="nucleotide sequence ID" value="NC_011741.1"/>
</dbReference>
<dbReference type="SMR" id="B7M8T0"/>
<dbReference type="KEGG" id="ecr:ECIAI1_4403"/>
<dbReference type="HOGENOM" id="CLU_004131_5_1_6"/>
<dbReference type="GO" id="GO:0032300">
    <property type="term" value="C:mismatch repair complex"/>
    <property type="evidence" value="ECO:0007669"/>
    <property type="project" value="InterPro"/>
</dbReference>
<dbReference type="GO" id="GO:0005524">
    <property type="term" value="F:ATP binding"/>
    <property type="evidence" value="ECO:0007669"/>
    <property type="project" value="InterPro"/>
</dbReference>
<dbReference type="GO" id="GO:0016887">
    <property type="term" value="F:ATP hydrolysis activity"/>
    <property type="evidence" value="ECO:0007669"/>
    <property type="project" value="InterPro"/>
</dbReference>
<dbReference type="GO" id="GO:0140664">
    <property type="term" value="F:ATP-dependent DNA damage sensor activity"/>
    <property type="evidence" value="ECO:0007669"/>
    <property type="project" value="InterPro"/>
</dbReference>
<dbReference type="GO" id="GO:0030983">
    <property type="term" value="F:mismatched DNA binding"/>
    <property type="evidence" value="ECO:0007669"/>
    <property type="project" value="InterPro"/>
</dbReference>
<dbReference type="GO" id="GO:0006298">
    <property type="term" value="P:mismatch repair"/>
    <property type="evidence" value="ECO:0007669"/>
    <property type="project" value="UniProtKB-UniRule"/>
</dbReference>
<dbReference type="CDD" id="cd16926">
    <property type="entry name" value="HATPase_MutL-MLH-PMS-like"/>
    <property type="match status" value="1"/>
</dbReference>
<dbReference type="CDD" id="cd03482">
    <property type="entry name" value="MutL_Trans_MutL"/>
    <property type="match status" value="1"/>
</dbReference>
<dbReference type="FunFam" id="3.30.230.10:FF:000013">
    <property type="entry name" value="DNA mismatch repair endonuclease MutL"/>
    <property type="match status" value="1"/>
</dbReference>
<dbReference type="FunFam" id="3.30.565.10:FF:000003">
    <property type="entry name" value="DNA mismatch repair endonuclease MutL"/>
    <property type="match status" value="1"/>
</dbReference>
<dbReference type="FunFam" id="3.30.1370.100:FF:000002">
    <property type="entry name" value="DNA mismatch repair protein MutL"/>
    <property type="match status" value="1"/>
</dbReference>
<dbReference type="Gene3D" id="3.30.230.10">
    <property type="match status" value="1"/>
</dbReference>
<dbReference type="Gene3D" id="3.30.565.10">
    <property type="entry name" value="Histidine kinase-like ATPase, C-terminal domain"/>
    <property type="match status" value="1"/>
</dbReference>
<dbReference type="Gene3D" id="3.30.1540.20">
    <property type="entry name" value="MutL, C-terminal domain, dimerisation subdomain"/>
    <property type="match status" value="1"/>
</dbReference>
<dbReference type="Gene3D" id="3.30.1370.100">
    <property type="entry name" value="MutL, C-terminal domain, regulatory subdomain"/>
    <property type="match status" value="1"/>
</dbReference>
<dbReference type="HAMAP" id="MF_00149">
    <property type="entry name" value="DNA_mis_repair"/>
    <property type="match status" value="1"/>
</dbReference>
<dbReference type="InterPro" id="IPR014762">
    <property type="entry name" value="DNA_mismatch_repair_CS"/>
</dbReference>
<dbReference type="InterPro" id="IPR020667">
    <property type="entry name" value="DNA_mismatch_repair_MutL"/>
</dbReference>
<dbReference type="InterPro" id="IPR013507">
    <property type="entry name" value="DNA_mismatch_S5_2-like"/>
</dbReference>
<dbReference type="InterPro" id="IPR036890">
    <property type="entry name" value="HATPase_C_sf"/>
</dbReference>
<dbReference type="InterPro" id="IPR002099">
    <property type="entry name" value="MutL/Mlh/PMS"/>
</dbReference>
<dbReference type="InterPro" id="IPR038973">
    <property type="entry name" value="MutL/Mlh/Pms-like"/>
</dbReference>
<dbReference type="InterPro" id="IPR014790">
    <property type="entry name" value="MutL_C"/>
</dbReference>
<dbReference type="InterPro" id="IPR042120">
    <property type="entry name" value="MutL_C_dimsub"/>
</dbReference>
<dbReference type="InterPro" id="IPR042121">
    <property type="entry name" value="MutL_C_regsub"/>
</dbReference>
<dbReference type="InterPro" id="IPR037198">
    <property type="entry name" value="MutL_C_sf"/>
</dbReference>
<dbReference type="InterPro" id="IPR020568">
    <property type="entry name" value="Ribosomal_Su5_D2-typ_SF"/>
</dbReference>
<dbReference type="InterPro" id="IPR014721">
    <property type="entry name" value="Ribsml_uS5_D2-typ_fold_subgr"/>
</dbReference>
<dbReference type="NCBIfam" id="TIGR00585">
    <property type="entry name" value="mutl"/>
    <property type="match status" value="1"/>
</dbReference>
<dbReference type="NCBIfam" id="NF000948">
    <property type="entry name" value="PRK00095.1-1"/>
    <property type="match status" value="1"/>
</dbReference>
<dbReference type="PANTHER" id="PTHR10073">
    <property type="entry name" value="DNA MISMATCH REPAIR PROTEIN MLH, PMS, MUTL"/>
    <property type="match status" value="1"/>
</dbReference>
<dbReference type="PANTHER" id="PTHR10073:SF12">
    <property type="entry name" value="DNA MISMATCH REPAIR PROTEIN MLH1"/>
    <property type="match status" value="1"/>
</dbReference>
<dbReference type="Pfam" id="PF01119">
    <property type="entry name" value="DNA_mis_repair"/>
    <property type="match status" value="1"/>
</dbReference>
<dbReference type="Pfam" id="PF13589">
    <property type="entry name" value="HATPase_c_3"/>
    <property type="match status" value="1"/>
</dbReference>
<dbReference type="Pfam" id="PF08676">
    <property type="entry name" value="MutL_C"/>
    <property type="match status" value="1"/>
</dbReference>
<dbReference type="SMART" id="SM01340">
    <property type="entry name" value="DNA_mis_repair"/>
    <property type="match status" value="1"/>
</dbReference>
<dbReference type="SMART" id="SM00853">
    <property type="entry name" value="MutL_C"/>
    <property type="match status" value="1"/>
</dbReference>
<dbReference type="SUPFAM" id="SSF55874">
    <property type="entry name" value="ATPase domain of HSP90 chaperone/DNA topoisomerase II/histidine kinase"/>
    <property type="match status" value="1"/>
</dbReference>
<dbReference type="SUPFAM" id="SSF118116">
    <property type="entry name" value="DNA mismatch repair protein MutL"/>
    <property type="match status" value="1"/>
</dbReference>
<dbReference type="SUPFAM" id="SSF54211">
    <property type="entry name" value="Ribosomal protein S5 domain 2-like"/>
    <property type="match status" value="1"/>
</dbReference>
<dbReference type="PROSITE" id="PS00058">
    <property type="entry name" value="DNA_MISMATCH_REPAIR_1"/>
    <property type="match status" value="1"/>
</dbReference>
<name>MUTL_ECO8A</name>
<accession>B7M8T0</accession>
<gene>
    <name evidence="1" type="primary">mutL</name>
    <name type="ordered locus">ECIAI1_4403</name>
</gene>
<organism>
    <name type="scientific">Escherichia coli O8 (strain IAI1)</name>
    <dbReference type="NCBI Taxonomy" id="585034"/>
    <lineage>
        <taxon>Bacteria</taxon>
        <taxon>Pseudomonadati</taxon>
        <taxon>Pseudomonadota</taxon>
        <taxon>Gammaproteobacteria</taxon>
        <taxon>Enterobacterales</taxon>
        <taxon>Enterobacteriaceae</taxon>
        <taxon>Escherichia</taxon>
    </lineage>
</organism>
<keyword id="KW-0227">DNA damage</keyword>
<keyword id="KW-0234">DNA repair</keyword>
<evidence type="ECO:0000255" key="1">
    <source>
        <dbReference type="HAMAP-Rule" id="MF_00149"/>
    </source>
</evidence>
<evidence type="ECO:0000256" key="2">
    <source>
        <dbReference type="SAM" id="MobiDB-lite"/>
    </source>
</evidence>